<evidence type="ECO:0000255" key="1">
    <source>
        <dbReference type="HAMAP-Rule" id="MF_00080"/>
    </source>
</evidence>
<sequence>MRRDVPQDSVRRNEQIRAREVRLIGAEGEQLGIISRNDAIALAKEKGLDLVEVAATADPPVCRVMDYGKYKYEQQKKKQEAKKRQTVVQIKEIKVRPKTDEHDYQTKLKHVRRFLEEGDRCKVTVFFRGREIVHKDRGLTILDRFVEDTKDLAKLDQEARAEGRTLQMMLAPIPKK</sequence>
<dbReference type="EMBL" id="AE017285">
    <property type="protein sequence ID" value="AAS97009.1"/>
    <property type="molecule type" value="Genomic_DNA"/>
</dbReference>
<dbReference type="RefSeq" id="WP_010939807.1">
    <property type="nucleotide sequence ID" value="NC_002937.3"/>
</dbReference>
<dbReference type="RefSeq" id="YP_011749.1">
    <property type="nucleotide sequence ID" value="NC_002937.3"/>
</dbReference>
<dbReference type="SMR" id="Q728R6"/>
<dbReference type="STRING" id="882.DVU_2537"/>
<dbReference type="PaxDb" id="882-DVU_2537"/>
<dbReference type="EnsemblBacteria" id="AAS97009">
    <property type="protein sequence ID" value="AAS97009"/>
    <property type="gene ID" value="DVU_2537"/>
</dbReference>
<dbReference type="KEGG" id="dvu:DVU_2537"/>
<dbReference type="PATRIC" id="fig|882.5.peg.2295"/>
<dbReference type="eggNOG" id="COG0290">
    <property type="taxonomic scope" value="Bacteria"/>
</dbReference>
<dbReference type="HOGENOM" id="CLU_054919_3_2_7"/>
<dbReference type="OrthoDB" id="9806014at2"/>
<dbReference type="PhylomeDB" id="Q728R6"/>
<dbReference type="Proteomes" id="UP000002194">
    <property type="component" value="Chromosome"/>
</dbReference>
<dbReference type="GO" id="GO:0005829">
    <property type="term" value="C:cytosol"/>
    <property type="evidence" value="ECO:0007669"/>
    <property type="project" value="TreeGrafter"/>
</dbReference>
<dbReference type="GO" id="GO:0016020">
    <property type="term" value="C:membrane"/>
    <property type="evidence" value="ECO:0007669"/>
    <property type="project" value="TreeGrafter"/>
</dbReference>
<dbReference type="GO" id="GO:0043022">
    <property type="term" value="F:ribosome binding"/>
    <property type="evidence" value="ECO:0007669"/>
    <property type="project" value="TreeGrafter"/>
</dbReference>
<dbReference type="GO" id="GO:0003743">
    <property type="term" value="F:translation initiation factor activity"/>
    <property type="evidence" value="ECO:0007669"/>
    <property type="project" value="UniProtKB-UniRule"/>
</dbReference>
<dbReference type="GO" id="GO:0032790">
    <property type="term" value="P:ribosome disassembly"/>
    <property type="evidence" value="ECO:0007669"/>
    <property type="project" value="TreeGrafter"/>
</dbReference>
<dbReference type="FunFam" id="3.10.20.80:FF:000001">
    <property type="entry name" value="Translation initiation factor IF-3"/>
    <property type="match status" value="1"/>
</dbReference>
<dbReference type="FunFam" id="3.30.110.10:FF:000001">
    <property type="entry name" value="Translation initiation factor IF-3"/>
    <property type="match status" value="1"/>
</dbReference>
<dbReference type="Gene3D" id="3.30.110.10">
    <property type="entry name" value="Translation initiation factor 3 (IF-3), C-terminal domain"/>
    <property type="match status" value="1"/>
</dbReference>
<dbReference type="Gene3D" id="3.10.20.80">
    <property type="entry name" value="Translation initiation factor 3 (IF-3), N-terminal domain"/>
    <property type="match status" value="1"/>
</dbReference>
<dbReference type="HAMAP" id="MF_00080">
    <property type="entry name" value="IF_3"/>
    <property type="match status" value="1"/>
</dbReference>
<dbReference type="InterPro" id="IPR036788">
    <property type="entry name" value="T_IF-3_C_sf"/>
</dbReference>
<dbReference type="InterPro" id="IPR036787">
    <property type="entry name" value="T_IF-3_N_sf"/>
</dbReference>
<dbReference type="InterPro" id="IPR019813">
    <property type="entry name" value="Translation_initiation_fac3_CS"/>
</dbReference>
<dbReference type="InterPro" id="IPR001288">
    <property type="entry name" value="Translation_initiation_fac_3"/>
</dbReference>
<dbReference type="InterPro" id="IPR019815">
    <property type="entry name" value="Translation_initiation_fac_3_C"/>
</dbReference>
<dbReference type="InterPro" id="IPR019814">
    <property type="entry name" value="Translation_initiation_fac_3_N"/>
</dbReference>
<dbReference type="NCBIfam" id="TIGR00168">
    <property type="entry name" value="infC"/>
    <property type="match status" value="1"/>
</dbReference>
<dbReference type="PANTHER" id="PTHR10938">
    <property type="entry name" value="TRANSLATION INITIATION FACTOR IF-3"/>
    <property type="match status" value="1"/>
</dbReference>
<dbReference type="PANTHER" id="PTHR10938:SF0">
    <property type="entry name" value="TRANSLATION INITIATION FACTOR IF-3, MITOCHONDRIAL"/>
    <property type="match status" value="1"/>
</dbReference>
<dbReference type="Pfam" id="PF00707">
    <property type="entry name" value="IF3_C"/>
    <property type="match status" value="1"/>
</dbReference>
<dbReference type="Pfam" id="PF05198">
    <property type="entry name" value="IF3_N"/>
    <property type="match status" value="1"/>
</dbReference>
<dbReference type="SUPFAM" id="SSF55200">
    <property type="entry name" value="Translation initiation factor IF3, C-terminal domain"/>
    <property type="match status" value="1"/>
</dbReference>
<dbReference type="SUPFAM" id="SSF54364">
    <property type="entry name" value="Translation initiation factor IF3, N-terminal domain"/>
    <property type="match status" value="1"/>
</dbReference>
<dbReference type="PROSITE" id="PS00938">
    <property type="entry name" value="IF3"/>
    <property type="match status" value="1"/>
</dbReference>
<protein>
    <recommendedName>
        <fullName evidence="1">Translation initiation factor IF-3</fullName>
    </recommendedName>
</protein>
<reference key="1">
    <citation type="journal article" date="2004" name="Nat. Biotechnol.">
        <title>The genome sequence of the anaerobic, sulfate-reducing bacterium Desulfovibrio vulgaris Hildenborough.</title>
        <authorList>
            <person name="Heidelberg J.F."/>
            <person name="Seshadri R."/>
            <person name="Haveman S.A."/>
            <person name="Hemme C.L."/>
            <person name="Paulsen I.T."/>
            <person name="Kolonay J.F."/>
            <person name="Eisen J.A."/>
            <person name="Ward N.L."/>
            <person name="Methe B.A."/>
            <person name="Brinkac L.M."/>
            <person name="Daugherty S.C."/>
            <person name="DeBoy R.T."/>
            <person name="Dodson R.J."/>
            <person name="Durkin A.S."/>
            <person name="Madupu R."/>
            <person name="Nelson W.C."/>
            <person name="Sullivan S.A."/>
            <person name="Fouts D.E."/>
            <person name="Haft D.H."/>
            <person name="Selengut J."/>
            <person name="Peterson J.D."/>
            <person name="Davidsen T.M."/>
            <person name="Zafar N."/>
            <person name="Zhou L."/>
            <person name="Radune D."/>
            <person name="Dimitrov G."/>
            <person name="Hance M."/>
            <person name="Tran K."/>
            <person name="Khouri H.M."/>
            <person name="Gill J."/>
            <person name="Utterback T.R."/>
            <person name="Feldblyum T.V."/>
            <person name="Wall J.D."/>
            <person name="Voordouw G."/>
            <person name="Fraser C.M."/>
        </authorList>
    </citation>
    <scope>NUCLEOTIDE SEQUENCE [LARGE SCALE GENOMIC DNA]</scope>
    <source>
        <strain>ATCC 29579 / DSM 644 / CCUG 34227 / NCIMB 8303 / VKM B-1760 / Hildenborough</strain>
    </source>
</reference>
<organism>
    <name type="scientific">Nitratidesulfovibrio vulgaris (strain ATCC 29579 / DSM 644 / CCUG 34227 / NCIMB 8303 / VKM B-1760 / Hildenborough)</name>
    <name type="common">Desulfovibrio vulgaris</name>
    <dbReference type="NCBI Taxonomy" id="882"/>
    <lineage>
        <taxon>Bacteria</taxon>
        <taxon>Pseudomonadati</taxon>
        <taxon>Thermodesulfobacteriota</taxon>
        <taxon>Desulfovibrionia</taxon>
        <taxon>Desulfovibrionales</taxon>
        <taxon>Desulfovibrionaceae</taxon>
        <taxon>Nitratidesulfovibrio</taxon>
    </lineage>
</organism>
<comment type="function">
    <text evidence="1">IF-3 binds to the 30S ribosomal subunit and shifts the equilibrium between 70S ribosomes and their 50S and 30S subunits in favor of the free subunits, thus enhancing the availability of 30S subunits on which protein synthesis initiation begins.</text>
</comment>
<comment type="subunit">
    <text evidence="1">Monomer.</text>
</comment>
<comment type="subcellular location">
    <subcellularLocation>
        <location evidence="1">Cytoplasm</location>
    </subcellularLocation>
</comment>
<comment type="similarity">
    <text evidence="1">Belongs to the IF-3 family.</text>
</comment>
<feature type="chain" id="PRO_0000177515" description="Translation initiation factor IF-3">
    <location>
        <begin position="1"/>
        <end position="176"/>
    </location>
</feature>
<name>IF3_NITV2</name>
<proteinExistence type="inferred from homology"/>
<keyword id="KW-0963">Cytoplasm</keyword>
<keyword id="KW-0396">Initiation factor</keyword>
<keyword id="KW-0648">Protein biosynthesis</keyword>
<keyword id="KW-1185">Reference proteome</keyword>
<gene>
    <name evidence="1" type="primary">infC</name>
    <name type="ordered locus">DVU_2537</name>
</gene>
<accession>Q728R6</accession>